<evidence type="ECO:0000255" key="1"/>
<evidence type="ECO:0000305" key="2"/>
<dbReference type="EMBL" id="L02214">
    <property type="protein sequence ID" value="AAA24830.1"/>
    <property type="molecule type" value="Genomic_DNA"/>
</dbReference>
<dbReference type="PIR" id="A47021">
    <property type="entry name" value="A47021"/>
</dbReference>
<dbReference type="SMR" id="P31698"/>
<dbReference type="OMA" id="IARGMFW"/>
<dbReference type="GO" id="GO:0005886">
    <property type="term" value="C:plasma membrane"/>
    <property type="evidence" value="ECO:0007669"/>
    <property type="project" value="UniProtKB-SubCell"/>
</dbReference>
<dbReference type="GO" id="GO:0015627">
    <property type="term" value="C:type II protein secretion system complex"/>
    <property type="evidence" value="ECO:0007669"/>
    <property type="project" value="InterPro"/>
</dbReference>
<dbReference type="GO" id="GO:0015628">
    <property type="term" value="P:protein secretion by the type II secretion system"/>
    <property type="evidence" value="ECO:0007669"/>
    <property type="project" value="InterPro"/>
</dbReference>
<dbReference type="Gene3D" id="2.30.30.830">
    <property type="match status" value="1"/>
</dbReference>
<dbReference type="Gene3D" id="2.30.42.10">
    <property type="match status" value="1"/>
</dbReference>
<dbReference type="InterPro" id="IPR036034">
    <property type="entry name" value="PDZ_sf"/>
</dbReference>
<dbReference type="InterPro" id="IPR024961">
    <property type="entry name" value="T2SS_GspC_N"/>
</dbReference>
<dbReference type="InterPro" id="IPR001639">
    <property type="entry name" value="T2SS_protein-GspC"/>
</dbReference>
<dbReference type="NCBIfam" id="TIGR01713">
    <property type="entry name" value="typeII_sec_gspC"/>
    <property type="match status" value="1"/>
</dbReference>
<dbReference type="Pfam" id="PF11356">
    <property type="entry name" value="T2SSC"/>
    <property type="match status" value="1"/>
</dbReference>
<dbReference type="PRINTS" id="PR00810">
    <property type="entry name" value="BCTERIALGSPC"/>
</dbReference>
<dbReference type="SUPFAM" id="SSF50156">
    <property type="entry name" value="PDZ domain-like"/>
    <property type="match status" value="1"/>
</dbReference>
<dbReference type="PROSITE" id="PS01141">
    <property type="entry name" value="T2SP_C"/>
    <property type="match status" value="1"/>
</dbReference>
<protein>
    <recommendedName>
        <fullName>Type II secretion system protein C</fullName>
        <shortName>T2SS protein C</shortName>
    </recommendedName>
    <alternativeName>
        <fullName>General secretion pathway protein C</fullName>
    </alternativeName>
    <alternativeName>
        <fullName>Pectic enzymes secretion protein OutC</fullName>
    </alternativeName>
</protein>
<sequence length="272" mass="30301">MNISKLPPLSPSVIRRILFYLLMLLFCQQLAMIFWRVGLPDNSPVASVQITPAQARQQPVTLNDFTLFGVSPEKNRSGALDASQMSNLPPSTLNLSLTGVMVGDDTARSIAIISKDNEQFSRGVNEEVPGYNAKIVSIRPDKVVLQYQGRYEVLGLYNQEENSADGVSGAQLNEQLQQRASTTMSDYVSFSPVMNDNKLHGYRLNPGPKSDSFYRVGLQDNDMAVALNGLDLRDEEQAKKAMERMADVHNFTLTVERDGQRQDIYMEFGGDE</sequence>
<organism>
    <name type="scientific">Dickeya chrysanthemi</name>
    <name type="common">Pectobacterium chrysanthemi</name>
    <name type="synonym">Erwinia chrysanthemi</name>
    <dbReference type="NCBI Taxonomy" id="556"/>
    <lineage>
        <taxon>Bacteria</taxon>
        <taxon>Pseudomonadati</taxon>
        <taxon>Pseudomonadota</taxon>
        <taxon>Gammaproteobacteria</taxon>
        <taxon>Enterobacterales</taxon>
        <taxon>Pectobacteriaceae</taxon>
        <taxon>Dickeya</taxon>
    </lineage>
</organism>
<accession>P31698</accession>
<name>GSPC1_DICCH</name>
<comment type="function">
    <text>Involved in a type II secretion system (T2SS, formerly general secretion pathway, GSP) for the export of proteins. Required for the translocation of the multiple pectic enzymes.</text>
</comment>
<comment type="subcellular location">
    <subcellularLocation>
        <location evidence="2">Cell inner membrane</location>
    </subcellularLocation>
</comment>
<comment type="similarity">
    <text evidence="2">Belongs to the GSP C family.</text>
</comment>
<feature type="chain" id="PRO_0000215002" description="Type II secretion system protein C">
    <location>
        <begin position="1"/>
        <end position="272"/>
    </location>
</feature>
<feature type="topological domain" description="Cytoplasmic" evidence="1">
    <location>
        <begin position="1"/>
        <end position="16"/>
    </location>
</feature>
<feature type="transmembrane region" description="Helical" evidence="1">
    <location>
        <begin position="17"/>
        <end position="35"/>
    </location>
</feature>
<feature type="topological domain" description="Periplasmic" evidence="1">
    <location>
        <begin position="36"/>
        <end position="272"/>
    </location>
</feature>
<reference key="1">
    <citation type="journal article" date="1992" name="J. Bacteriol.">
        <title>Analysis of eight out genes in a cluster required for pectic enzyme secretion by Erwinia chrysanthemi: sequence comparison with secretion genes from other Gram-negative bacteria.</title>
        <authorList>
            <person name="Lindeberg M."/>
            <person name="Collmer A."/>
        </authorList>
    </citation>
    <scope>NUCLEOTIDE SEQUENCE [GENOMIC DNA]</scope>
    <source>
        <strain>EC16</strain>
    </source>
</reference>
<proteinExistence type="inferred from homology"/>
<keyword id="KW-0997">Cell inner membrane</keyword>
<keyword id="KW-1003">Cell membrane</keyword>
<keyword id="KW-0472">Membrane</keyword>
<keyword id="KW-0653">Protein transport</keyword>
<keyword id="KW-0812">Transmembrane</keyword>
<keyword id="KW-1133">Transmembrane helix</keyword>
<keyword id="KW-0813">Transport</keyword>
<gene>
    <name type="primary">outC</name>
</gene>